<organism>
    <name type="scientific">Hepatitis B virus genotype F2 subtype adw4q (isolate Senegal/9203)</name>
    <name type="common">HBV-F</name>
    <dbReference type="NCBI Taxonomy" id="489503"/>
    <lineage>
        <taxon>Viruses</taxon>
        <taxon>Riboviria</taxon>
        <taxon>Pararnavirae</taxon>
        <taxon>Artverviricota</taxon>
        <taxon>Revtraviricetes</taxon>
        <taxon>Blubervirales</taxon>
        <taxon>Hepadnaviridae</taxon>
        <taxon>Orthohepadnavirus</taxon>
        <taxon>Hepatitis B virus</taxon>
        <taxon>hepatitis B virus genotype F</taxon>
    </lineage>
</organism>
<proteinExistence type="inferred from homology"/>
<comment type="function">
    <text evidence="2">May regulate immune response to the intracellular capsid in acting as a T-cell tolerogen, by having an immunoregulatory effect which prevents destruction of infected cells by cytotoxic T-cells. This immune regulation may predispose to chronicity during perinatal infections and prevent severe liver injury during adult infections.</text>
</comment>
<comment type="subunit">
    <text evidence="2">Homodimerizes.</text>
</comment>
<comment type="subcellular location">
    <subcellularLocation>
        <location evidence="2">Secreted</location>
    </subcellularLocation>
    <subcellularLocation>
        <location evidence="2">Host nucleus</location>
    </subcellularLocation>
</comment>
<comment type="alternative products">
    <event type="alternative initiation"/>
    <isoform>
        <id>P0C6I5-1</id>
        <name>External core antigen</name>
        <sequence type="displayed"/>
    </isoform>
    <isoform>
        <id>Q69608-1</id>
        <name>Capsid protein</name>
        <sequence type="external"/>
    </isoform>
</comment>
<comment type="PTM">
    <text evidence="2">Phosphorylated.</text>
</comment>
<comment type="PTM">
    <text evidence="2">Cleaved by host furin.</text>
</comment>
<comment type="similarity">
    <text evidence="2">Belongs to the orthohepadnavirus precore antigen family.</text>
</comment>
<name>HBEAG_HBVF6</name>
<organismHost>
    <name type="scientific">Homo sapiens</name>
    <name type="common">Human</name>
    <dbReference type="NCBI Taxonomy" id="9606"/>
</organismHost>
<organismHost>
    <name type="scientific">Pan troglodytes</name>
    <name type="common">Chimpanzee</name>
    <dbReference type="NCBI Taxonomy" id="9598"/>
</organismHost>
<protein>
    <recommendedName>
        <fullName evidence="2">External core antigen</fullName>
    </recommendedName>
    <alternativeName>
        <fullName evidence="2">HBeAg</fullName>
    </alternativeName>
    <alternativeName>
        <fullName evidence="2">Precore protein</fullName>
    </alternativeName>
    <alternativeName>
        <fullName evidence="2">p25</fullName>
    </alternativeName>
</protein>
<gene>
    <name evidence="2" type="primary">C</name>
</gene>
<sequence>MQLFHLCLIISCSCPTVQASKLCLGWLWGMDIDPYKEFGASVELFSFLASDFFPSVRDLLDTASALYRDALESPEHCTPNHTALRQAILCWGELMTLASWVGNNLEDPAARDLVVNYVNTNMGLKIRQLLWFHISCLTFGRETVLEYLVSFGVWIRTPPAYRPPNAPILSTLPETTVVRRRGRSPRRRTPSPRRRRSQSPRRRRSQSPASQC</sequence>
<keyword id="KW-0024">Alternative initiation</keyword>
<keyword id="KW-1015">Disulfide bond</keyword>
<keyword id="KW-1048">Host nucleus</keyword>
<keyword id="KW-0945">Host-virus interaction</keyword>
<keyword id="KW-0677">Repeat</keyword>
<keyword id="KW-0964">Secreted</keyword>
<keyword id="KW-0732">Signal</keyword>
<keyword id="KW-0899">Viral immunoevasion</keyword>
<dbReference type="EMBL" id="X75663">
    <property type="status" value="NOT_ANNOTATED_CDS"/>
    <property type="molecule type" value="Genomic_DNA"/>
</dbReference>
<dbReference type="SMR" id="P0C6I5"/>
<dbReference type="Proteomes" id="UP000007406">
    <property type="component" value="Genome"/>
</dbReference>
<dbReference type="GO" id="GO:0005576">
    <property type="term" value="C:extracellular region"/>
    <property type="evidence" value="ECO:0007669"/>
    <property type="project" value="UniProtKB-SubCell"/>
</dbReference>
<dbReference type="GO" id="GO:0043657">
    <property type="term" value="C:host cell"/>
    <property type="evidence" value="ECO:0007669"/>
    <property type="project" value="GOC"/>
</dbReference>
<dbReference type="GO" id="GO:0030430">
    <property type="term" value="C:host cell cytoplasm"/>
    <property type="evidence" value="ECO:0007669"/>
    <property type="project" value="UniProtKB-UniRule"/>
</dbReference>
<dbReference type="GO" id="GO:0042025">
    <property type="term" value="C:host cell nucleus"/>
    <property type="evidence" value="ECO:0007669"/>
    <property type="project" value="UniProtKB-SubCell"/>
</dbReference>
<dbReference type="GO" id="GO:0039619">
    <property type="term" value="C:T=4 icosahedral viral capsid"/>
    <property type="evidence" value="ECO:0007669"/>
    <property type="project" value="UniProtKB-UniRule"/>
</dbReference>
<dbReference type="GO" id="GO:0003677">
    <property type="term" value="F:DNA binding"/>
    <property type="evidence" value="ECO:0007669"/>
    <property type="project" value="UniProtKB-UniRule"/>
</dbReference>
<dbReference type="GO" id="GO:0003723">
    <property type="term" value="F:RNA binding"/>
    <property type="evidence" value="ECO:0007669"/>
    <property type="project" value="UniProtKB-UniRule"/>
</dbReference>
<dbReference type="GO" id="GO:0005198">
    <property type="term" value="F:structural molecule activity"/>
    <property type="evidence" value="ECO:0007669"/>
    <property type="project" value="UniProtKB-UniRule"/>
</dbReference>
<dbReference type="GO" id="GO:0075521">
    <property type="term" value="P:microtubule-dependent intracellular transport of viral material towards nucleus"/>
    <property type="evidence" value="ECO:0007669"/>
    <property type="project" value="UniProtKB-UniRule"/>
</dbReference>
<dbReference type="GO" id="GO:0046718">
    <property type="term" value="P:symbiont entry into host cell"/>
    <property type="evidence" value="ECO:0007669"/>
    <property type="project" value="UniProtKB-UniRule"/>
</dbReference>
<dbReference type="GO" id="GO:0075732">
    <property type="term" value="P:viral penetration into host nucleus"/>
    <property type="evidence" value="ECO:0007669"/>
    <property type="project" value="UniProtKB-UniRule"/>
</dbReference>
<dbReference type="FunFam" id="1.10.4090.10:FF:000001">
    <property type="entry name" value="Capsid protein"/>
    <property type="match status" value="1"/>
</dbReference>
<dbReference type="Gene3D" id="1.10.4090.10">
    <property type="entry name" value="Viral capsid, core domain supefamily, Hepatitis B virus"/>
    <property type="match status" value="1"/>
</dbReference>
<dbReference type="HAMAP" id="MF_04076">
    <property type="entry name" value="HBV_HBEAG"/>
    <property type="match status" value="1"/>
</dbReference>
<dbReference type="InterPro" id="IPR013195">
    <property type="entry name" value="Hepatitis_B_virus_capsid_N"/>
</dbReference>
<dbReference type="InterPro" id="IPR002006">
    <property type="entry name" value="Hepatitis_core"/>
</dbReference>
<dbReference type="InterPro" id="IPR036459">
    <property type="entry name" value="Viral_capsid_core_dom_sf_HBV"/>
</dbReference>
<dbReference type="Pfam" id="PF08290">
    <property type="entry name" value="Hep_core_N"/>
    <property type="match status" value="1"/>
</dbReference>
<dbReference type="Pfam" id="PF00906">
    <property type="entry name" value="Hepatitis_core"/>
    <property type="match status" value="3"/>
</dbReference>
<dbReference type="SUPFAM" id="SSF47852">
    <property type="entry name" value="Hepatitis B viral capsid (hbcag)"/>
    <property type="match status" value="1"/>
</dbReference>
<reference key="1">
    <citation type="journal article" date="1994" name="Virology">
        <title>Complete genomes, phylogenetic relatedness, and structural proteins of six strains of the hepatitis B virus, four of which represent two new genotypes.</title>
        <authorList>
            <person name="Norder H."/>
            <person name="Courouce A.M."/>
            <person name="Magnius L.O."/>
        </authorList>
    </citation>
    <scope>NUCLEOTIDE SEQUENCE [GENOMIC DNA]</scope>
</reference>
<accession>P0C6I5</accession>
<feature type="signal peptide" evidence="2">
    <location>
        <begin position="1"/>
        <end position="19"/>
    </location>
</feature>
<feature type="chain" id="PRO_0000324733" description="External core antigen" evidence="2">
    <location>
        <begin position="20"/>
        <end position="212"/>
    </location>
</feature>
<feature type="propeptide" id="PRO_0000324734" evidence="1">
    <location>
        <begin position="184"/>
        <end position="212"/>
    </location>
</feature>
<feature type="repeat" description="1; half-length">
    <location>
        <begin position="184"/>
        <end position="190"/>
    </location>
</feature>
<feature type="repeat" description="2">
    <location>
        <begin position="191"/>
        <end position="198"/>
    </location>
</feature>
<feature type="repeat" description="3">
    <location>
        <begin position="199"/>
        <end position="206"/>
    </location>
</feature>
<feature type="region of interest" description="HBEAG" evidence="2">
    <location>
        <begin position="25"/>
        <end position="27"/>
    </location>
</feature>
<feature type="region of interest" description="Disordered" evidence="3">
    <location>
        <begin position="165"/>
        <end position="212"/>
    </location>
</feature>
<feature type="region of interest" description="3 X 8 AA repeats of S-P-R-R-R-R-S-Q">
    <location>
        <begin position="184"/>
        <end position="206"/>
    </location>
</feature>
<feature type="compositionally biased region" description="Basic residues" evidence="3">
    <location>
        <begin position="178"/>
        <end position="205"/>
    </location>
</feature>
<feature type="site" description="Cleavage; by host" evidence="2">
    <location>
        <begin position="183"/>
        <end position="184"/>
    </location>
</feature>
<feature type="disulfide bond" description="Interchain" evidence="2">
    <location>
        <position position="77"/>
    </location>
</feature>
<feature type="disulfide bond" description="Interchain" evidence="2">
    <location>
        <position position="90"/>
    </location>
</feature>
<evidence type="ECO:0000250" key="1"/>
<evidence type="ECO:0000255" key="2">
    <source>
        <dbReference type="HAMAP-Rule" id="MF_04076"/>
    </source>
</evidence>
<evidence type="ECO:0000256" key="3">
    <source>
        <dbReference type="SAM" id="MobiDB-lite"/>
    </source>
</evidence>